<reference key="1">
    <citation type="journal article" date="2003" name="Nat. Genet.">
        <title>Comparative analysis of the genome sequences of Bordetella pertussis, Bordetella parapertussis and Bordetella bronchiseptica.</title>
        <authorList>
            <person name="Parkhill J."/>
            <person name="Sebaihia M."/>
            <person name="Preston A."/>
            <person name="Murphy L.D."/>
            <person name="Thomson N.R."/>
            <person name="Harris D.E."/>
            <person name="Holden M.T.G."/>
            <person name="Churcher C.M."/>
            <person name="Bentley S.D."/>
            <person name="Mungall K.L."/>
            <person name="Cerdeno-Tarraga A.-M."/>
            <person name="Temple L."/>
            <person name="James K.D."/>
            <person name="Harris B."/>
            <person name="Quail M.A."/>
            <person name="Achtman M."/>
            <person name="Atkin R."/>
            <person name="Baker S."/>
            <person name="Basham D."/>
            <person name="Bason N."/>
            <person name="Cherevach I."/>
            <person name="Chillingworth T."/>
            <person name="Collins M."/>
            <person name="Cronin A."/>
            <person name="Davis P."/>
            <person name="Doggett J."/>
            <person name="Feltwell T."/>
            <person name="Goble A."/>
            <person name="Hamlin N."/>
            <person name="Hauser H."/>
            <person name="Holroyd S."/>
            <person name="Jagels K."/>
            <person name="Leather S."/>
            <person name="Moule S."/>
            <person name="Norberczak H."/>
            <person name="O'Neil S."/>
            <person name="Ormond D."/>
            <person name="Price C."/>
            <person name="Rabbinowitsch E."/>
            <person name="Rutter S."/>
            <person name="Sanders M."/>
            <person name="Saunders D."/>
            <person name="Seeger K."/>
            <person name="Sharp S."/>
            <person name="Simmonds M."/>
            <person name="Skelton J."/>
            <person name="Squares R."/>
            <person name="Squares S."/>
            <person name="Stevens K."/>
            <person name="Unwin L."/>
            <person name="Whitehead S."/>
            <person name="Barrell B.G."/>
            <person name="Maskell D.J."/>
        </authorList>
    </citation>
    <scope>NUCLEOTIDE SEQUENCE [LARGE SCALE GENOMIC DNA]</scope>
    <source>
        <strain>Tohama I / ATCC BAA-589 / NCTC 13251</strain>
    </source>
</reference>
<name>Y2916_BORPE</name>
<sequence length="160" mass="17844">MPSFDVVSEVDKHELTNAVDQANRELSTRFDFKGTNASFELEGYVVTQVAPSAFQLKQMLDILRGRLSARSIDVRCMDVADPLENLGGARQKVTIKQGIEQAIAKKLIAAIKASKVKVESQINGEKLRITGKKRDDLQAVIALLRKTDVDLPLQFENFRD</sequence>
<comment type="function">
    <text evidence="1">Nucleotide-binding protein.</text>
</comment>
<comment type="similarity">
    <text evidence="1">Belongs to the YajQ family.</text>
</comment>
<gene>
    <name type="ordered locus">BP2916</name>
</gene>
<feature type="chain" id="PRO_0000106176" description="Nucleotide-binding protein BP2916">
    <location>
        <begin position="1"/>
        <end position="160"/>
    </location>
</feature>
<accession>Q7VUZ9</accession>
<keyword id="KW-0547">Nucleotide-binding</keyword>
<keyword id="KW-1185">Reference proteome</keyword>
<dbReference type="EMBL" id="BX640419">
    <property type="protein sequence ID" value="CAE43188.1"/>
    <property type="molecule type" value="Genomic_DNA"/>
</dbReference>
<dbReference type="RefSeq" id="NP_881498.1">
    <property type="nucleotide sequence ID" value="NC_002929.2"/>
</dbReference>
<dbReference type="RefSeq" id="WP_003809252.1">
    <property type="nucleotide sequence ID" value="NZ_CP039022.1"/>
</dbReference>
<dbReference type="SMR" id="Q7VUZ9"/>
<dbReference type="STRING" id="257313.BP2916"/>
<dbReference type="PaxDb" id="257313-BP2916"/>
<dbReference type="KEGG" id="bpe:BP2916"/>
<dbReference type="PATRIC" id="fig|257313.5.peg.3152"/>
<dbReference type="eggNOG" id="COG1666">
    <property type="taxonomic scope" value="Bacteria"/>
</dbReference>
<dbReference type="HOGENOM" id="CLU_099839_1_0_4"/>
<dbReference type="Proteomes" id="UP000002676">
    <property type="component" value="Chromosome"/>
</dbReference>
<dbReference type="GO" id="GO:0005829">
    <property type="term" value="C:cytosol"/>
    <property type="evidence" value="ECO:0007669"/>
    <property type="project" value="TreeGrafter"/>
</dbReference>
<dbReference type="GO" id="GO:0000166">
    <property type="term" value="F:nucleotide binding"/>
    <property type="evidence" value="ECO:0007669"/>
    <property type="project" value="TreeGrafter"/>
</dbReference>
<dbReference type="CDD" id="cd11740">
    <property type="entry name" value="YajQ_like"/>
    <property type="match status" value="1"/>
</dbReference>
<dbReference type="Gene3D" id="3.30.70.860">
    <property type="match status" value="1"/>
</dbReference>
<dbReference type="Gene3D" id="3.30.70.990">
    <property type="entry name" value="YajQ-like, domain 2"/>
    <property type="match status" value="1"/>
</dbReference>
<dbReference type="HAMAP" id="MF_00632">
    <property type="entry name" value="YajQ"/>
    <property type="match status" value="1"/>
</dbReference>
<dbReference type="InterPro" id="IPR007551">
    <property type="entry name" value="DUF520"/>
</dbReference>
<dbReference type="InterPro" id="IPR035571">
    <property type="entry name" value="UPF0234-like_C"/>
</dbReference>
<dbReference type="InterPro" id="IPR035570">
    <property type="entry name" value="UPF0234_N"/>
</dbReference>
<dbReference type="InterPro" id="IPR036183">
    <property type="entry name" value="YajQ-like_sf"/>
</dbReference>
<dbReference type="NCBIfam" id="NF003819">
    <property type="entry name" value="PRK05412.1"/>
    <property type="match status" value="1"/>
</dbReference>
<dbReference type="PANTHER" id="PTHR30476">
    <property type="entry name" value="UPF0234 PROTEIN YAJQ"/>
    <property type="match status" value="1"/>
</dbReference>
<dbReference type="PANTHER" id="PTHR30476:SF0">
    <property type="entry name" value="UPF0234 PROTEIN YAJQ"/>
    <property type="match status" value="1"/>
</dbReference>
<dbReference type="Pfam" id="PF04461">
    <property type="entry name" value="DUF520"/>
    <property type="match status" value="1"/>
</dbReference>
<dbReference type="SUPFAM" id="SSF89963">
    <property type="entry name" value="YajQ-like"/>
    <property type="match status" value="2"/>
</dbReference>
<protein>
    <recommendedName>
        <fullName evidence="1">Nucleotide-binding protein BP2916</fullName>
    </recommendedName>
</protein>
<organism>
    <name type="scientific">Bordetella pertussis (strain Tohama I / ATCC BAA-589 / NCTC 13251)</name>
    <dbReference type="NCBI Taxonomy" id="257313"/>
    <lineage>
        <taxon>Bacteria</taxon>
        <taxon>Pseudomonadati</taxon>
        <taxon>Pseudomonadota</taxon>
        <taxon>Betaproteobacteria</taxon>
        <taxon>Burkholderiales</taxon>
        <taxon>Alcaligenaceae</taxon>
        <taxon>Bordetella</taxon>
    </lineage>
</organism>
<proteinExistence type="inferred from homology"/>
<evidence type="ECO:0000255" key="1">
    <source>
        <dbReference type="HAMAP-Rule" id="MF_00632"/>
    </source>
</evidence>